<keyword id="KW-1003">Cell membrane</keyword>
<keyword id="KW-1015">Disulfide bond</keyword>
<keyword id="KW-0297">G-protein coupled receptor</keyword>
<keyword id="KW-0325">Glycoprotein</keyword>
<keyword id="KW-0472">Membrane</keyword>
<keyword id="KW-0552">Olfaction</keyword>
<keyword id="KW-0675">Receptor</keyword>
<keyword id="KW-1185">Reference proteome</keyword>
<keyword id="KW-0716">Sensory transduction</keyword>
<keyword id="KW-0807">Transducer</keyword>
<keyword id="KW-0812">Transmembrane</keyword>
<keyword id="KW-1133">Transmembrane helix</keyword>
<sequence>MELLTNNLKFITDPFVCRLRHLSPTPSEEHMKNKNNVTEFILLGLTQNPEGQKVLFVTFLLIYMVTIMGNLLIIVTIMASQSLGSPMYFFLASLSFIDTVYSTAFAPKMIVDLLSEKKTISFQGCMAQLFMDHLFAGAEVILLVVMAYDRYMAICKPLHELITMNRRVCVLMLLAAWIGGFLHSLVQFLFIYQLPFCGPNVIDNFLCDLYPLLKLACTNTYVTGLSMIANGGAICAVTFFTILLSYGVILHSLKTQSLEGKRKAFYTCASHVTVVILFFVPCIFLYARPNSTFPIDKSMTVVLTFITPMLNPLIYTLKNAEMKSAMRKLWSKKVSLAGKWLYHS</sequence>
<gene>
    <name type="primary">OR4A15</name>
</gene>
<feature type="chain" id="PRO_0000150525" description="Olfactory receptor 4A15">
    <location>
        <begin position="1"/>
        <end position="344"/>
    </location>
</feature>
<feature type="topological domain" description="Extracellular" evidence="1">
    <location>
        <begin position="1"/>
        <end position="53"/>
    </location>
</feature>
<feature type="transmembrane region" description="Helical; Name=1" evidence="1">
    <location>
        <begin position="54"/>
        <end position="77"/>
    </location>
</feature>
<feature type="topological domain" description="Cytoplasmic" evidence="1">
    <location>
        <begin position="78"/>
        <end position="85"/>
    </location>
</feature>
<feature type="transmembrane region" description="Helical; Name=2" evidence="1">
    <location>
        <begin position="86"/>
        <end position="107"/>
    </location>
</feature>
<feature type="topological domain" description="Extracellular" evidence="1">
    <location>
        <begin position="108"/>
        <end position="128"/>
    </location>
</feature>
<feature type="transmembrane region" description="Helical; Name=3" evidence="1">
    <location>
        <begin position="129"/>
        <end position="148"/>
    </location>
</feature>
<feature type="topological domain" description="Cytoplasmic" evidence="1">
    <location>
        <begin position="149"/>
        <end position="167"/>
    </location>
</feature>
<feature type="transmembrane region" description="Helical; Name=4" evidence="1">
    <location>
        <begin position="168"/>
        <end position="186"/>
    </location>
</feature>
<feature type="topological domain" description="Extracellular" evidence="1">
    <location>
        <begin position="187"/>
        <end position="223"/>
    </location>
</feature>
<feature type="transmembrane region" description="Helical; Name=5" evidence="1">
    <location>
        <begin position="224"/>
        <end position="247"/>
    </location>
</feature>
<feature type="topological domain" description="Cytoplasmic" evidence="1">
    <location>
        <begin position="248"/>
        <end position="263"/>
    </location>
</feature>
<feature type="transmembrane region" description="Helical; Name=6" evidence="1">
    <location>
        <begin position="264"/>
        <end position="286"/>
    </location>
</feature>
<feature type="topological domain" description="Extracellular" evidence="1">
    <location>
        <begin position="287"/>
        <end position="297"/>
    </location>
</feature>
<feature type="transmembrane region" description="Helical; Name=7" evidence="1">
    <location>
        <begin position="298"/>
        <end position="317"/>
    </location>
</feature>
<feature type="topological domain" description="Cytoplasmic" evidence="1">
    <location>
        <begin position="318"/>
        <end position="344"/>
    </location>
</feature>
<feature type="glycosylation site" description="N-linked (GlcNAc...) asparagine" evidence="1">
    <location>
        <position position="36"/>
    </location>
</feature>
<feature type="glycosylation site" description="N-linked (GlcNAc...) asparagine" evidence="1">
    <location>
        <position position="290"/>
    </location>
</feature>
<feature type="disulfide bond" evidence="2">
    <location>
        <begin position="125"/>
        <end position="217"/>
    </location>
</feature>
<feature type="sequence variant" id="VAR_055053" description="In dbSNP:rs1425193.">
    <original>P</original>
    <variation>S</variation>
    <location>
        <position position="26"/>
    </location>
</feature>
<feature type="sequence variant" id="VAR_055054" description="In dbSNP:rs7927370.">
    <original>A</original>
    <variation>V</variation>
    <location>
        <position position="287"/>
    </location>
</feature>
<organism>
    <name type="scientific">Homo sapiens</name>
    <name type="common">Human</name>
    <dbReference type="NCBI Taxonomy" id="9606"/>
    <lineage>
        <taxon>Eukaryota</taxon>
        <taxon>Metazoa</taxon>
        <taxon>Chordata</taxon>
        <taxon>Craniata</taxon>
        <taxon>Vertebrata</taxon>
        <taxon>Euteleostomi</taxon>
        <taxon>Mammalia</taxon>
        <taxon>Eutheria</taxon>
        <taxon>Euarchontoglires</taxon>
        <taxon>Primates</taxon>
        <taxon>Haplorrhini</taxon>
        <taxon>Catarrhini</taxon>
        <taxon>Hominidae</taxon>
        <taxon>Homo</taxon>
    </lineage>
</organism>
<evidence type="ECO:0000255" key="1"/>
<evidence type="ECO:0000255" key="2">
    <source>
        <dbReference type="PROSITE-ProRule" id="PRU00521"/>
    </source>
</evidence>
<evidence type="ECO:0000305" key="3"/>
<reference key="1">
    <citation type="submission" date="2001-07" db="EMBL/GenBank/DDBJ databases">
        <title>Genome-wide discovery and analysis of human seven transmembrane helix receptor genes.</title>
        <authorList>
            <person name="Suwa M."/>
            <person name="Sato T."/>
            <person name="Okouchi I."/>
            <person name="Arita M."/>
            <person name="Futami K."/>
            <person name="Matsumoto S."/>
            <person name="Tsutsumi S."/>
            <person name="Aburatani H."/>
            <person name="Asai K."/>
            <person name="Akiyama Y."/>
        </authorList>
    </citation>
    <scope>NUCLEOTIDE SEQUENCE [GENOMIC DNA]</scope>
</reference>
<reference key="2">
    <citation type="journal article" date="2006" name="Nature">
        <title>Human chromosome 11 DNA sequence and analysis including novel gene identification.</title>
        <authorList>
            <person name="Taylor T.D."/>
            <person name="Noguchi H."/>
            <person name="Totoki Y."/>
            <person name="Toyoda A."/>
            <person name="Kuroki Y."/>
            <person name="Dewar K."/>
            <person name="Lloyd C."/>
            <person name="Itoh T."/>
            <person name="Takeda T."/>
            <person name="Kim D.-W."/>
            <person name="She X."/>
            <person name="Barlow K.F."/>
            <person name="Bloom T."/>
            <person name="Bruford E."/>
            <person name="Chang J.L."/>
            <person name="Cuomo C.A."/>
            <person name="Eichler E."/>
            <person name="FitzGerald M.G."/>
            <person name="Jaffe D.B."/>
            <person name="LaButti K."/>
            <person name="Nicol R."/>
            <person name="Park H.-S."/>
            <person name="Seaman C."/>
            <person name="Sougnez C."/>
            <person name="Yang X."/>
            <person name="Zimmer A.R."/>
            <person name="Zody M.C."/>
            <person name="Birren B.W."/>
            <person name="Nusbaum C."/>
            <person name="Fujiyama A."/>
            <person name="Hattori M."/>
            <person name="Rogers J."/>
            <person name="Lander E.S."/>
            <person name="Sakaki Y."/>
        </authorList>
    </citation>
    <scope>NUCLEOTIDE SEQUENCE [LARGE SCALE GENOMIC DNA]</scope>
</reference>
<reference key="3">
    <citation type="journal article" date="2002" name="Genomics">
        <title>DEFOG: a practical scheme for deciphering families of genes.</title>
        <authorList>
            <person name="Fuchs T."/>
            <person name="Malecova B."/>
            <person name="Linhart C."/>
            <person name="Sharan R."/>
            <person name="Khen M."/>
            <person name="Herwig R."/>
            <person name="Shmulevich D."/>
            <person name="Elkon R."/>
            <person name="Steinfath M."/>
            <person name="O'Brien J.K."/>
            <person name="Radelof U."/>
            <person name="Lehrach H."/>
            <person name="Lancet D."/>
            <person name="Shamir R."/>
        </authorList>
    </citation>
    <scope>NUCLEOTIDE SEQUENCE [GENOMIC DNA] OF 96-308</scope>
</reference>
<reference key="4">
    <citation type="journal article" date="2004" name="Proc. Natl. Acad. Sci. U.S.A.">
        <title>The human olfactory receptor gene family.</title>
        <authorList>
            <person name="Malnic B."/>
            <person name="Godfrey P.A."/>
            <person name="Buck L.B."/>
        </authorList>
    </citation>
    <scope>IDENTIFICATION</scope>
</reference>
<reference key="5">
    <citation type="journal article" date="2004" name="Proc. Natl. Acad. Sci. U.S.A.">
        <authorList>
            <person name="Malnic B."/>
            <person name="Godfrey P.A."/>
            <person name="Buck L.B."/>
        </authorList>
    </citation>
    <scope>ERRATUM OF PUBMED:14983052</scope>
</reference>
<proteinExistence type="inferred from homology"/>
<protein>
    <recommendedName>
        <fullName>Olfactory receptor 4A15</fullName>
    </recommendedName>
    <alternativeName>
        <fullName>Olfactory receptor OR11-118</fullName>
    </alternativeName>
</protein>
<dbReference type="EMBL" id="AB065776">
    <property type="protein sequence ID" value="BAC05996.1"/>
    <property type="molecule type" value="Genomic_DNA"/>
</dbReference>
<dbReference type="EMBL" id="AP005639">
    <property type="status" value="NOT_ANNOTATED_CDS"/>
    <property type="molecule type" value="Genomic_DNA"/>
</dbReference>
<dbReference type="EMBL" id="AF399578">
    <property type="protein sequence ID" value="AAK95063.1"/>
    <property type="molecule type" value="Genomic_DNA"/>
</dbReference>
<dbReference type="EMBL" id="BK004248">
    <property type="protein sequence ID" value="DAA04646.1"/>
    <property type="status" value="ALT_INIT"/>
    <property type="molecule type" value="Genomic_DNA"/>
</dbReference>
<dbReference type="RefSeq" id="NP_001005275.1">
    <property type="nucleotide sequence ID" value="NM_001005275.1"/>
</dbReference>
<dbReference type="SMR" id="Q8NGL6"/>
<dbReference type="BioGRID" id="123450">
    <property type="interactions" value="1"/>
</dbReference>
<dbReference type="FunCoup" id="Q8NGL6">
    <property type="interactions" value="416"/>
</dbReference>
<dbReference type="IntAct" id="Q8NGL6">
    <property type="interactions" value="1"/>
</dbReference>
<dbReference type="STRING" id="9606.ENSP00000325065"/>
<dbReference type="GlyCosmos" id="Q8NGL6">
    <property type="glycosylation" value="2 sites, No reported glycans"/>
</dbReference>
<dbReference type="GlyGen" id="Q8NGL6">
    <property type="glycosylation" value="3 sites"/>
</dbReference>
<dbReference type="iPTMnet" id="Q8NGL6"/>
<dbReference type="PhosphoSitePlus" id="Q8NGL6"/>
<dbReference type="BioMuta" id="OR4A15"/>
<dbReference type="DMDM" id="229462945"/>
<dbReference type="jPOST" id="Q8NGL6"/>
<dbReference type="PaxDb" id="9606-ENSP00000325065"/>
<dbReference type="PeptideAtlas" id="Q8NGL6"/>
<dbReference type="DNASU" id="81328"/>
<dbReference type="GeneID" id="81328"/>
<dbReference type="KEGG" id="hsa:81328"/>
<dbReference type="UCSC" id="uc010rif.2">
    <property type="organism name" value="human"/>
</dbReference>
<dbReference type="AGR" id="HGNC:15152"/>
<dbReference type="CTD" id="81328"/>
<dbReference type="GeneCards" id="OR4A15"/>
<dbReference type="HGNC" id="HGNC:15152">
    <property type="gene designation" value="OR4A15"/>
</dbReference>
<dbReference type="neXtProt" id="NX_Q8NGL6"/>
<dbReference type="PharmGKB" id="PA32234"/>
<dbReference type="eggNOG" id="ENOG502TEH8">
    <property type="taxonomic scope" value="Eukaryota"/>
</dbReference>
<dbReference type="HOGENOM" id="CLU_012526_8_1_1"/>
<dbReference type="InParanoid" id="Q8NGL6"/>
<dbReference type="OrthoDB" id="10017003at2759"/>
<dbReference type="PAN-GO" id="Q8NGL6">
    <property type="GO annotations" value="2 GO annotations based on evolutionary models"/>
</dbReference>
<dbReference type="PhylomeDB" id="Q8NGL6"/>
<dbReference type="TreeFam" id="TF337251"/>
<dbReference type="PathwayCommons" id="Q8NGL6"/>
<dbReference type="Reactome" id="R-HSA-9752946">
    <property type="pathway name" value="Expression and translocation of olfactory receptors"/>
</dbReference>
<dbReference type="BioGRID-ORCS" id="81328">
    <property type="hits" value="20 hits in 739 CRISPR screens"/>
</dbReference>
<dbReference type="GeneWiki" id="OR4A15"/>
<dbReference type="GenomeRNAi" id="81328"/>
<dbReference type="Pharos" id="Q8NGL6">
    <property type="development level" value="Tdark"/>
</dbReference>
<dbReference type="PRO" id="PR:Q8NGL6"/>
<dbReference type="Proteomes" id="UP000005640">
    <property type="component" value="Chromosome 11"/>
</dbReference>
<dbReference type="RNAct" id="Q8NGL6">
    <property type="molecule type" value="protein"/>
</dbReference>
<dbReference type="GO" id="GO:0005886">
    <property type="term" value="C:plasma membrane"/>
    <property type="evidence" value="ECO:0000318"/>
    <property type="project" value="GO_Central"/>
</dbReference>
<dbReference type="GO" id="GO:0004930">
    <property type="term" value="F:G protein-coupled receptor activity"/>
    <property type="evidence" value="ECO:0007669"/>
    <property type="project" value="UniProtKB-KW"/>
</dbReference>
<dbReference type="GO" id="GO:0004984">
    <property type="term" value="F:olfactory receptor activity"/>
    <property type="evidence" value="ECO:0000318"/>
    <property type="project" value="GO_Central"/>
</dbReference>
<dbReference type="CDD" id="cd15939">
    <property type="entry name" value="7tmA_OR4A-like"/>
    <property type="match status" value="1"/>
</dbReference>
<dbReference type="FunFam" id="1.10.1220.70:FF:000001">
    <property type="entry name" value="Olfactory receptor"/>
    <property type="match status" value="1"/>
</dbReference>
<dbReference type="FunFam" id="1.20.1070.10:FF:000007">
    <property type="entry name" value="Olfactory receptor"/>
    <property type="match status" value="1"/>
</dbReference>
<dbReference type="Gene3D" id="1.20.1070.10">
    <property type="entry name" value="Rhodopsin 7-helix transmembrane proteins"/>
    <property type="match status" value="1"/>
</dbReference>
<dbReference type="InterPro" id="IPR000276">
    <property type="entry name" value="GPCR_Rhodpsn"/>
</dbReference>
<dbReference type="InterPro" id="IPR017452">
    <property type="entry name" value="GPCR_Rhodpsn_7TM"/>
</dbReference>
<dbReference type="InterPro" id="IPR000725">
    <property type="entry name" value="Olfact_rcpt"/>
</dbReference>
<dbReference type="InterPro" id="IPR050427">
    <property type="entry name" value="Olfactory_Receptors"/>
</dbReference>
<dbReference type="PANTHER" id="PTHR48002">
    <property type="entry name" value="OLFACTORY RECEPTOR"/>
    <property type="match status" value="1"/>
</dbReference>
<dbReference type="Pfam" id="PF13853">
    <property type="entry name" value="7tm_4"/>
    <property type="match status" value="1"/>
</dbReference>
<dbReference type="PRINTS" id="PR00237">
    <property type="entry name" value="GPCRRHODOPSN"/>
</dbReference>
<dbReference type="PRINTS" id="PR00245">
    <property type="entry name" value="OLFACTORYR"/>
</dbReference>
<dbReference type="SUPFAM" id="SSF81321">
    <property type="entry name" value="Family A G protein-coupled receptor-like"/>
    <property type="match status" value="1"/>
</dbReference>
<dbReference type="PROSITE" id="PS00237">
    <property type="entry name" value="G_PROTEIN_RECEP_F1_1"/>
    <property type="match status" value="1"/>
</dbReference>
<dbReference type="PROSITE" id="PS50262">
    <property type="entry name" value="G_PROTEIN_RECEP_F1_2"/>
    <property type="match status" value="1"/>
</dbReference>
<accession>Q8NGL6</accession>
<accession>Q6IFL4</accession>
<accession>Q96R65</accession>
<comment type="function">
    <text evidence="3">Odorant receptor.</text>
</comment>
<comment type="subcellular location">
    <subcellularLocation>
        <location>Cell membrane</location>
        <topology>Multi-pass membrane protein</topology>
    </subcellularLocation>
</comment>
<comment type="similarity">
    <text evidence="2">Belongs to the G-protein coupled receptor 1 family.</text>
</comment>
<comment type="caution">
    <text evidence="3">It is uncertain whether Met-1 or Met-31 is the initiator.</text>
</comment>
<comment type="sequence caution" evidence="3">
    <conflict type="erroneous initiation">
        <sequence resource="EMBL-CDS" id="DAA04646"/>
    </conflict>
</comment>
<comment type="online information" name="Human Olfactory Receptor Data Exploratorium (HORDE)">
    <link uri="http://genome.weizmann.ac.il/horde/card/index/symbol:OR4A15"/>
</comment>
<name>O4A15_HUMAN</name>